<name>RL2_BLOPB</name>
<feature type="chain" id="PRO_0000237159" description="Large ribosomal subunit protein uL2">
    <location>
        <begin position="1"/>
        <end position="275"/>
    </location>
</feature>
<feature type="region of interest" description="Disordered" evidence="2">
    <location>
        <begin position="214"/>
        <end position="275"/>
    </location>
</feature>
<feature type="compositionally biased region" description="Basic residues" evidence="2">
    <location>
        <begin position="255"/>
        <end position="275"/>
    </location>
</feature>
<comment type="function">
    <text evidence="1">One of the primary rRNA binding proteins. Required for association of the 30S and 50S subunits to form the 70S ribosome, for tRNA binding and peptide bond formation. It has been suggested to have peptidyltransferase activity; this is somewhat controversial. Makes several contacts with the 16S rRNA in the 70S ribosome.</text>
</comment>
<comment type="subunit">
    <text evidence="1">Part of the 50S ribosomal subunit. Forms a bridge to the 30S subunit in the 70S ribosome.</text>
</comment>
<comment type="similarity">
    <text evidence="1">Belongs to the universal ribosomal protein uL2 family.</text>
</comment>
<keyword id="KW-1185">Reference proteome</keyword>
<keyword id="KW-0687">Ribonucleoprotein</keyword>
<keyword id="KW-0689">Ribosomal protein</keyword>
<keyword id="KW-0694">RNA-binding</keyword>
<keyword id="KW-0699">rRNA-binding</keyword>
<reference key="1">
    <citation type="journal article" date="2005" name="Genome Res.">
        <title>Genome sequence of Blochmannia pennsylvanicus indicates parallel evolutionary trends among bacterial mutualists of insects.</title>
        <authorList>
            <person name="Degnan P.H."/>
            <person name="Lazarus A.B."/>
            <person name="Wernegreen J.J."/>
        </authorList>
    </citation>
    <scope>NUCLEOTIDE SEQUENCE [LARGE SCALE GENOMIC DNA]</scope>
    <source>
        <strain>BPEN</strain>
    </source>
</reference>
<sequence length="275" mass="30588">MPIIKCNPTSPGRRHVTKLVNHDLYKGNPFSSLLSNKINNRSGGRNNYGRITVRHIGGGHKKRYRIIDFKRNKDGISAVIKRLEYDPNRSANIALLSYRDGEYRYILAPKDVKIGDFISSGANVPIKPGNALPMSNIPIGSIIHNVEMKPGKGGQLARSAGSYIQIVARDGEYMILRLRSGEIRKIRCECRATVGEVGNAEHMLRMLGKAGANRWRGNRPTVRGTAMNPIDHPHGGGEGKNFGKHPVSPWGIQTKGKKTRSNKRTNKFILSHRNK</sequence>
<dbReference type="EMBL" id="CP000016">
    <property type="protein sequence ID" value="AAZ40835.1"/>
    <property type="molecule type" value="Genomic_DNA"/>
</dbReference>
<dbReference type="RefSeq" id="WP_011282742.1">
    <property type="nucleotide sequence ID" value="NC_007292.1"/>
</dbReference>
<dbReference type="SMR" id="Q493K5"/>
<dbReference type="STRING" id="291272.BPEN_201"/>
<dbReference type="KEGG" id="bpn:BPEN_201"/>
<dbReference type="eggNOG" id="COG0090">
    <property type="taxonomic scope" value="Bacteria"/>
</dbReference>
<dbReference type="HOGENOM" id="CLU_036235_2_1_6"/>
<dbReference type="OrthoDB" id="9778722at2"/>
<dbReference type="Proteomes" id="UP000007794">
    <property type="component" value="Chromosome"/>
</dbReference>
<dbReference type="GO" id="GO:0005829">
    <property type="term" value="C:cytosol"/>
    <property type="evidence" value="ECO:0007669"/>
    <property type="project" value="UniProtKB-ARBA"/>
</dbReference>
<dbReference type="GO" id="GO:0015934">
    <property type="term" value="C:large ribosomal subunit"/>
    <property type="evidence" value="ECO:0007669"/>
    <property type="project" value="InterPro"/>
</dbReference>
<dbReference type="GO" id="GO:0019843">
    <property type="term" value="F:rRNA binding"/>
    <property type="evidence" value="ECO:0007669"/>
    <property type="project" value="UniProtKB-UniRule"/>
</dbReference>
<dbReference type="GO" id="GO:0003735">
    <property type="term" value="F:structural constituent of ribosome"/>
    <property type="evidence" value="ECO:0007669"/>
    <property type="project" value="InterPro"/>
</dbReference>
<dbReference type="GO" id="GO:0016740">
    <property type="term" value="F:transferase activity"/>
    <property type="evidence" value="ECO:0007669"/>
    <property type="project" value="InterPro"/>
</dbReference>
<dbReference type="GO" id="GO:0002181">
    <property type="term" value="P:cytoplasmic translation"/>
    <property type="evidence" value="ECO:0007669"/>
    <property type="project" value="TreeGrafter"/>
</dbReference>
<dbReference type="FunFam" id="2.30.30.30:FF:000001">
    <property type="entry name" value="50S ribosomal protein L2"/>
    <property type="match status" value="1"/>
</dbReference>
<dbReference type="FunFam" id="2.40.50.140:FF:000003">
    <property type="entry name" value="50S ribosomal protein L2"/>
    <property type="match status" value="1"/>
</dbReference>
<dbReference type="FunFam" id="4.10.950.10:FF:000001">
    <property type="entry name" value="50S ribosomal protein L2"/>
    <property type="match status" value="1"/>
</dbReference>
<dbReference type="Gene3D" id="2.30.30.30">
    <property type="match status" value="1"/>
</dbReference>
<dbReference type="Gene3D" id="2.40.50.140">
    <property type="entry name" value="Nucleic acid-binding proteins"/>
    <property type="match status" value="1"/>
</dbReference>
<dbReference type="Gene3D" id="4.10.950.10">
    <property type="entry name" value="Ribosomal protein L2, domain 3"/>
    <property type="match status" value="1"/>
</dbReference>
<dbReference type="HAMAP" id="MF_01320_B">
    <property type="entry name" value="Ribosomal_uL2_B"/>
    <property type="match status" value="1"/>
</dbReference>
<dbReference type="InterPro" id="IPR012340">
    <property type="entry name" value="NA-bd_OB-fold"/>
</dbReference>
<dbReference type="InterPro" id="IPR014722">
    <property type="entry name" value="Rib_uL2_dom2"/>
</dbReference>
<dbReference type="InterPro" id="IPR002171">
    <property type="entry name" value="Ribosomal_uL2"/>
</dbReference>
<dbReference type="InterPro" id="IPR005880">
    <property type="entry name" value="Ribosomal_uL2_bac/org-type"/>
</dbReference>
<dbReference type="InterPro" id="IPR022669">
    <property type="entry name" value="Ribosomal_uL2_C"/>
</dbReference>
<dbReference type="InterPro" id="IPR022671">
    <property type="entry name" value="Ribosomal_uL2_CS"/>
</dbReference>
<dbReference type="InterPro" id="IPR014726">
    <property type="entry name" value="Ribosomal_uL2_dom3"/>
</dbReference>
<dbReference type="InterPro" id="IPR022666">
    <property type="entry name" value="Ribosomal_uL2_RNA-bd_dom"/>
</dbReference>
<dbReference type="InterPro" id="IPR008991">
    <property type="entry name" value="Translation_prot_SH3-like_sf"/>
</dbReference>
<dbReference type="NCBIfam" id="TIGR01171">
    <property type="entry name" value="rplB_bact"/>
    <property type="match status" value="1"/>
</dbReference>
<dbReference type="PANTHER" id="PTHR13691:SF5">
    <property type="entry name" value="LARGE RIBOSOMAL SUBUNIT PROTEIN UL2M"/>
    <property type="match status" value="1"/>
</dbReference>
<dbReference type="PANTHER" id="PTHR13691">
    <property type="entry name" value="RIBOSOMAL PROTEIN L2"/>
    <property type="match status" value="1"/>
</dbReference>
<dbReference type="Pfam" id="PF00181">
    <property type="entry name" value="Ribosomal_L2"/>
    <property type="match status" value="1"/>
</dbReference>
<dbReference type="Pfam" id="PF03947">
    <property type="entry name" value="Ribosomal_L2_C"/>
    <property type="match status" value="1"/>
</dbReference>
<dbReference type="PIRSF" id="PIRSF002158">
    <property type="entry name" value="Ribosomal_L2"/>
    <property type="match status" value="1"/>
</dbReference>
<dbReference type="SMART" id="SM01383">
    <property type="entry name" value="Ribosomal_L2"/>
    <property type="match status" value="1"/>
</dbReference>
<dbReference type="SMART" id="SM01382">
    <property type="entry name" value="Ribosomal_L2_C"/>
    <property type="match status" value="1"/>
</dbReference>
<dbReference type="SUPFAM" id="SSF50249">
    <property type="entry name" value="Nucleic acid-binding proteins"/>
    <property type="match status" value="1"/>
</dbReference>
<dbReference type="SUPFAM" id="SSF50104">
    <property type="entry name" value="Translation proteins SH3-like domain"/>
    <property type="match status" value="1"/>
</dbReference>
<dbReference type="PROSITE" id="PS00467">
    <property type="entry name" value="RIBOSOMAL_L2"/>
    <property type="match status" value="1"/>
</dbReference>
<accession>Q493K5</accession>
<gene>
    <name evidence="1" type="primary">rplB</name>
    <name type="ordered locus">BPEN_201</name>
</gene>
<proteinExistence type="inferred from homology"/>
<organism>
    <name type="scientific">Blochmanniella pennsylvanica (strain BPEN)</name>
    <dbReference type="NCBI Taxonomy" id="291272"/>
    <lineage>
        <taxon>Bacteria</taxon>
        <taxon>Pseudomonadati</taxon>
        <taxon>Pseudomonadota</taxon>
        <taxon>Gammaproteobacteria</taxon>
        <taxon>Enterobacterales</taxon>
        <taxon>Enterobacteriaceae</taxon>
        <taxon>ant endosymbionts</taxon>
        <taxon>Candidatus Blochmanniella</taxon>
    </lineage>
</organism>
<evidence type="ECO:0000255" key="1">
    <source>
        <dbReference type="HAMAP-Rule" id="MF_01320"/>
    </source>
</evidence>
<evidence type="ECO:0000256" key="2">
    <source>
        <dbReference type="SAM" id="MobiDB-lite"/>
    </source>
</evidence>
<evidence type="ECO:0000305" key="3"/>
<protein>
    <recommendedName>
        <fullName evidence="1">Large ribosomal subunit protein uL2</fullName>
    </recommendedName>
    <alternativeName>
        <fullName evidence="3">50S ribosomal protein L2</fullName>
    </alternativeName>
</protein>